<proteinExistence type="inferred from homology"/>
<reference key="1">
    <citation type="journal article" date="2011" name="PLoS Genet.">
        <title>The evolution of host specialization in the vertebrate gut symbiont Lactobacillus reuteri.</title>
        <authorList>
            <person name="Frese S.A."/>
            <person name="Benson A.K."/>
            <person name="Tannock G.W."/>
            <person name="Loach D.M."/>
            <person name="Kim J."/>
            <person name="Zhang M."/>
            <person name="Oh P.L."/>
            <person name="Heng N.C."/>
            <person name="Patil P.B."/>
            <person name="Juge N."/>
            <person name="Mackenzie D.A."/>
            <person name="Pearson B.M."/>
            <person name="Lapidus A."/>
            <person name="Dalin E."/>
            <person name="Tice H."/>
            <person name="Goltsman E."/>
            <person name="Land M."/>
            <person name="Hauser L."/>
            <person name="Ivanova N."/>
            <person name="Kyrpides N.C."/>
            <person name="Walter J."/>
        </authorList>
    </citation>
    <scope>NUCLEOTIDE SEQUENCE [LARGE SCALE GENOMIC DNA]</scope>
    <source>
        <strain>DSM 20016</strain>
    </source>
</reference>
<organism>
    <name type="scientific">Limosilactobacillus reuteri (strain DSM 20016)</name>
    <name type="common">Lactobacillus reuteri</name>
    <dbReference type="NCBI Taxonomy" id="557436"/>
    <lineage>
        <taxon>Bacteria</taxon>
        <taxon>Bacillati</taxon>
        <taxon>Bacillota</taxon>
        <taxon>Bacilli</taxon>
        <taxon>Lactobacillales</taxon>
        <taxon>Lactobacillaceae</taxon>
        <taxon>Limosilactobacillus</taxon>
    </lineage>
</organism>
<evidence type="ECO:0000255" key="1">
    <source>
        <dbReference type="HAMAP-Rule" id="MF_01364"/>
    </source>
</evidence>
<evidence type="ECO:0000305" key="2"/>
<protein>
    <recommendedName>
        <fullName evidence="1">Small ribosomal subunit protein uS14B</fullName>
    </recommendedName>
    <alternativeName>
        <fullName evidence="2">30S ribosomal protein S14 type Z</fullName>
    </alternativeName>
</protein>
<sequence>MAKKSMIAKCNRPAKFSSREYTRCARCGRPHSVYRKFHLCRICLRELAHKGQIPGLKKASW</sequence>
<name>RS14Z_LIMRD</name>
<accession>A5VLJ2</accession>
<dbReference type="EMBL" id="CP000705">
    <property type="protein sequence ID" value="ABQ83716.1"/>
    <property type="molecule type" value="Genomic_DNA"/>
</dbReference>
<dbReference type="RefSeq" id="WP_003664547.1">
    <property type="nucleotide sequence ID" value="NZ_AZDD01000010.1"/>
</dbReference>
<dbReference type="SMR" id="A5VLJ2"/>
<dbReference type="STRING" id="557436.Lreu_1470"/>
<dbReference type="KEGG" id="lre:Lreu_1470"/>
<dbReference type="eggNOG" id="COG0199">
    <property type="taxonomic scope" value="Bacteria"/>
</dbReference>
<dbReference type="HOGENOM" id="CLU_139869_3_0_9"/>
<dbReference type="Proteomes" id="UP000001991">
    <property type="component" value="Chromosome"/>
</dbReference>
<dbReference type="GO" id="GO:0015935">
    <property type="term" value="C:small ribosomal subunit"/>
    <property type="evidence" value="ECO:0007669"/>
    <property type="project" value="TreeGrafter"/>
</dbReference>
<dbReference type="GO" id="GO:0019843">
    <property type="term" value="F:rRNA binding"/>
    <property type="evidence" value="ECO:0007669"/>
    <property type="project" value="UniProtKB-UniRule"/>
</dbReference>
<dbReference type="GO" id="GO:0003735">
    <property type="term" value="F:structural constituent of ribosome"/>
    <property type="evidence" value="ECO:0007669"/>
    <property type="project" value="InterPro"/>
</dbReference>
<dbReference type="GO" id="GO:0008270">
    <property type="term" value="F:zinc ion binding"/>
    <property type="evidence" value="ECO:0007669"/>
    <property type="project" value="UniProtKB-UniRule"/>
</dbReference>
<dbReference type="GO" id="GO:0006412">
    <property type="term" value="P:translation"/>
    <property type="evidence" value="ECO:0007669"/>
    <property type="project" value="UniProtKB-UniRule"/>
</dbReference>
<dbReference type="FunFam" id="4.10.830.10:FF:000001">
    <property type="entry name" value="30S ribosomal protein S14 type Z"/>
    <property type="match status" value="1"/>
</dbReference>
<dbReference type="Gene3D" id="4.10.830.10">
    <property type="entry name" value="30s Ribosomal Protein S14, Chain N"/>
    <property type="match status" value="1"/>
</dbReference>
<dbReference type="HAMAP" id="MF_01364_B">
    <property type="entry name" value="Ribosomal_uS14_2_B"/>
    <property type="match status" value="1"/>
</dbReference>
<dbReference type="InterPro" id="IPR001209">
    <property type="entry name" value="Ribosomal_uS14"/>
</dbReference>
<dbReference type="InterPro" id="IPR023053">
    <property type="entry name" value="Ribosomal_uS14_bact"/>
</dbReference>
<dbReference type="InterPro" id="IPR018271">
    <property type="entry name" value="Ribosomal_uS14_CS"/>
</dbReference>
<dbReference type="InterPro" id="IPR043140">
    <property type="entry name" value="Ribosomal_uS14_sf"/>
</dbReference>
<dbReference type="NCBIfam" id="NF005974">
    <property type="entry name" value="PRK08061.1"/>
    <property type="match status" value="1"/>
</dbReference>
<dbReference type="PANTHER" id="PTHR19836">
    <property type="entry name" value="30S RIBOSOMAL PROTEIN S14"/>
    <property type="match status" value="1"/>
</dbReference>
<dbReference type="PANTHER" id="PTHR19836:SF26">
    <property type="entry name" value="SMALL RIBOSOMAL SUBUNIT PROTEIN US14B"/>
    <property type="match status" value="1"/>
</dbReference>
<dbReference type="Pfam" id="PF00253">
    <property type="entry name" value="Ribosomal_S14"/>
    <property type="match status" value="1"/>
</dbReference>
<dbReference type="SUPFAM" id="SSF57716">
    <property type="entry name" value="Glucocorticoid receptor-like (DNA-binding domain)"/>
    <property type="match status" value="1"/>
</dbReference>
<dbReference type="PROSITE" id="PS00527">
    <property type="entry name" value="RIBOSOMAL_S14"/>
    <property type="match status" value="1"/>
</dbReference>
<gene>
    <name evidence="1" type="primary">rpsZ</name>
    <name evidence="1" type="synonym">rpsN</name>
    <name type="ordered locus">Lreu_1470</name>
</gene>
<feature type="chain" id="PRO_1000067947" description="Small ribosomal subunit protein uS14B">
    <location>
        <begin position="1"/>
        <end position="61"/>
    </location>
</feature>
<feature type="binding site" evidence="1">
    <location>
        <position position="24"/>
    </location>
    <ligand>
        <name>Zn(2+)</name>
        <dbReference type="ChEBI" id="CHEBI:29105"/>
    </ligand>
</feature>
<feature type="binding site" evidence="1">
    <location>
        <position position="27"/>
    </location>
    <ligand>
        <name>Zn(2+)</name>
        <dbReference type="ChEBI" id="CHEBI:29105"/>
    </ligand>
</feature>
<feature type="binding site" evidence="1">
    <location>
        <position position="40"/>
    </location>
    <ligand>
        <name>Zn(2+)</name>
        <dbReference type="ChEBI" id="CHEBI:29105"/>
    </ligand>
</feature>
<feature type="binding site" evidence="1">
    <location>
        <position position="43"/>
    </location>
    <ligand>
        <name>Zn(2+)</name>
        <dbReference type="ChEBI" id="CHEBI:29105"/>
    </ligand>
</feature>
<comment type="function">
    <text evidence="1">Binds 16S rRNA, required for the assembly of 30S particles and may also be responsible for determining the conformation of the 16S rRNA at the A site.</text>
</comment>
<comment type="cofactor">
    <cofactor evidence="1">
        <name>Zn(2+)</name>
        <dbReference type="ChEBI" id="CHEBI:29105"/>
    </cofactor>
    <text evidence="1">Binds 1 zinc ion per subunit.</text>
</comment>
<comment type="subunit">
    <text evidence="1">Part of the 30S ribosomal subunit. Contacts proteins S3 and S10.</text>
</comment>
<comment type="similarity">
    <text evidence="1">Belongs to the universal ribosomal protein uS14 family. Zinc-binding uS14 subfamily.</text>
</comment>
<keyword id="KW-0479">Metal-binding</keyword>
<keyword id="KW-1185">Reference proteome</keyword>
<keyword id="KW-0687">Ribonucleoprotein</keyword>
<keyword id="KW-0689">Ribosomal protein</keyword>
<keyword id="KW-0694">RNA-binding</keyword>
<keyword id="KW-0699">rRNA-binding</keyword>
<keyword id="KW-0862">Zinc</keyword>